<gene>
    <name type="ORF">ORF338</name>
</gene>
<dbReference type="EMBL" id="AJ854042">
    <property type="protein sequence ID" value="CAH69422.1"/>
    <property type="molecule type" value="Genomic_DNA"/>
</dbReference>
<dbReference type="RefSeq" id="YP_001496960.1">
    <property type="nucleotide sequence ID" value="NC_009884.1"/>
</dbReference>
<dbReference type="KEGG" id="vg:5656071"/>
<dbReference type="Proteomes" id="UP000006364">
    <property type="component" value="Genome"/>
</dbReference>
<organism>
    <name type="scientific">Acidianus filamentous virus 2 (isolate Italy/Pozzuoli)</name>
    <name type="common">AFV-2</name>
    <dbReference type="NCBI Taxonomy" id="654910"/>
    <lineage>
        <taxon>Viruses</taxon>
        <taxon>Adnaviria</taxon>
        <taxon>Zilligvirae</taxon>
        <taxon>Taleaviricota</taxon>
        <taxon>Tokiviricetes</taxon>
        <taxon>Ligamenvirales</taxon>
        <taxon>Lipothrixviridae</taxon>
        <taxon>Deltalipothrixvirus</taxon>
        <taxon>Acidianus filamentous virus 2</taxon>
    </lineage>
</organism>
<accession>Q573D4</accession>
<organismHost>
    <name type="scientific">Acidianus sp. F28</name>
    <dbReference type="NCBI Taxonomy" id="315458"/>
</organismHost>
<keyword id="KW-1185">Reference proteome</keyword>
<sequence length="338" mass="36167">MDLDWLMKCKCKKMLKRLTVKVSGYVVAKITKKGSEETKLKPLVMGKHNQILNLQSLLNAFVGNSSGVTTSSYGEGITLLGANGESVAELAFLTVTPQPTAGGGEVIFTGLDISNSAYTTTQQVLTTESSGYDIEIATADLSFTKNSDEQLYMTWVISFTVTSNPDNVTIVPSLNMSFTVPPNGYYSAPSLCQYTPDNGNLKAQSATGQSSPTTSNPSGYELTTLVTSLLFTWLIYSSSPGASLEYLAFVGTNSLALAVETNTMGSVSGVQYTATTIGPNNFVTGNYIFVESSNNWTVYTRVSPNANDSTISPVFVNAVYSGLFSECTFQGIVIQFTT</sequence>
<protein>
    <recommendedName>
        <fullName>Uncharacterized protein ORF338</fullName>
    </recommendedName>
</protein>
<name>Y338_AFV2P</name>
<reference key="1">
    <citation type="journal article" date="2005" name="J. Bacteriol.">
        <title>Structure and genome organization of AFV2, a novel archaeal lipothrixvirus with unusual terminal and core structures.</title>
        <authorList>
            <person name="Haring M."/>
            <person name="Vestergaard G."/>
            <person name="Brugger K."/>
            <person name="Rachel R."/>
            <person name="Garrett R.A."/>
            <person name="Prangishvili D."/>
        </authorList>
    </citation>
    <scope>NUCLEOTIDE SEQUENCE [GENOMIC DNA]</scope>
</reference>
<proteinExistence type="predicted"/>
<feature type="chain" id="PRO_0000384528" description="Uncharacterized protein ORF338">
    <location>
        <begin position="1"/>
        <end position="338"/>
    </location>
</feature>